<name>MALT_SALTY</name>
<organism>
    <name type="scientific">Salmonella typhimurium (strain LT2 / SGSC1412 / ATCC 700720)</name>
    <dbReference type="NCBI Taxonomy" id="99287"/>
    <lineage>
        <taxon>Bacteria</taxon>
        <taxon>Pseudomonadati</taxon>
        <taxon>Pseudomonadota</taxon>
        <taxon>Gammaproteobacteria</taxon>
        <taxon>Enterobacterales</taxon>
        <taxon>Enterobacteriaceae</taxon>
        <taxon>Salmonella</taxon>
    </lineage>
</organism>
<protein>
    <recommendedName>
        <fullName evidence="1">HTH-type transcriptional regulator MalT</fullName>
    </recommendedName>
    <alternativeName>
        <fullName evidence="1">ATP-dependent transcriptional activator MalT</fullName>
    </alternativeName>
</protein>
<accession>Q8ZLI3</accession>
<gene>
    <name evidence="1" type="primary">malT</name>
    <name type="ordered locus">STM3515</name>
</gene>
<keyword id="KW-0010">Activator</keyword>
<keyword id="KW-0067">ATP-binding</keyword>
<keyword id="KW-0119">Carbohydrate metabolism</keyword>
<keyword id="KW-0238">DNA-binding</keyword>
<keyword id="KW-0547">Nucleotide-binding</keyword>
<keyword id="KW-1185">Reference proteome</keyword>
<keyword id="KW-0804">Transcription</keyword>
<keyword id="KW-0805">Transcription regulation</keyword>
<comment type="function">
    <text evidence="1">Positively regulates the transcription of the maltose regulon whose gene products are responsible for uptake and catabolism of malto-oligosaccharides. Specifically binds to the promoter region of its target genes, recognizing a short DNA motif called the MalT box.</text>
</comment>
<comment type="activity regulation">
    <text evidence="1">Activated by ATP and maltotriose, which are both required for DNA binding.</text>
</comment>
<comment type="subunit">
    <text evidence="1">Monomer in solution. Oligomerizes to an active state in the presence of the positive effectors ATP and maltotriose.</text>
</comment>
<comment type="similarity">
    <text evidence="1">Belongs to the MalT family.</text>
</comment>
<dbReference type="EMBL" id="AE006468">
    <property type="protein sequence ID" value="AAL22377.1"/>
    <property type="molecule type" value="Genomic_DNA"/>
</dbReference>
<dbReference type="RefSeq" id="NP_462418.1">
    <property type="nucleotide sequence ID" value="NC_003197.2"/>
</dbReference>
<dbReference type="RefSeq" id="WP_000907029.1">
    <property type="nucleotide sequence ID" value="NC_003197.2"/>
</dbReference>
<dbReference type="SMR" id="Q8ZLI3"/>
<dbReference type="STRING" id="99287.STM3515"/>
<dbReference type="PaxDb" id="99287-STM3515"/>
<dbReference type="GeneID" id="1255038"/>
<dbReference type="KEGG" id="stm:STM3515"/>
<dbReference type="PATRIC" id="fig|99287.12.peg.3715"/>
<dbReference type="HOGENOM" id="CLU_006325_3_0_6"/>
<dbReference type="OMA" id="SDWVSNA"/>
<dbReference type="PhylomeDB" id="Q8ZLI3"/>
<dbReference type="BioCyc" id="SENT99287:STM3515-MONOMER"/>
<dbReference type="Proteomes" id="UP000001014">
    <property type="component" value="Chromosome"/>
</dbReference>
<dbReference type="GO" id="GO:0005524">
    <property type="term" value="F:ATP binding"/>
    <property type="evidence" value="ECO:0007669"/>
    <property type="project" value="UniProtKB-UniRule"/>
</dbReference>
<dbReference type="GO" id="GO:0003677">
    <property type="term" value="F:DNA binding"/>
    <property type="evidence" value="ECO:0007669"/>
    <property type="project" value="UniProtKB-KW"/>
</dbReference>
<dbReference type="GO" id="GO:0003700">
    <property type="term" value="F:DNA-binding transcription factor activity"/>
    <property type="evidence" value="ECO:0007669"/>
    <property type="project" value="UniProtKB-UniRule"/>
</dbReference>
<dbReference type="GO" id="GO:0045913">
    <property type="term" value="P:positive regulation of carbohydrate metabolic process"/>
    <property type="evidence" value="ECO:0007669"/>
    <property type="project" value="UniProtKB-UniRule"/>
</dbReference>
<dbReference type="GO" id="GO:0045893">
    <property type="term" value="P:positive regulation of DNA-templated transcription"/>
    <property type="evidence" value="ECO:0007669"/>
    <property type="project" value="UniProtKB-UniRule"/>
</dbReference>
<dbReference type="CDD" id="cd06170">
    <property type="entry name" value="LuxR_C_like"/>
    <property type="match status" value="1"/>
</dbReference>
<dbReference type="FunFam" id="1.10.10.10:FF:000115">
    <property type="entry name" value="HTH-type transcriptional regulator MalT"/>
    <property type="match status" value="1"/>
</dbReference>
<dbReference type="Gene3D" id="1.25.40.10">
    <property type="entry name" value="Tetratricopeptide repeat domain"/>
    <property type="match status" value="1"/>
</dbReference>
<dbReference type="Gene3D" id="1.10.10.10">
    <property type="entry name" value="Winged helix-like DNA-binding domain superfamily/Winged helix DNA-binding domain"/>
    <property type="match status" value="1"/>
</dbReference>
<dbReference type="HAMAP" id="MF_01247">
    <property type="entry name" value="HTH_type_MalT"/>
    <property type="match status" value="1"/>
</dbReference>
<dbReference type="InterPro" id="IPR027417">
    <property type="entry name" value="P-loop_NTPase"/>
</dbReference>
<dbReference type="InterPro" id="IPR016032">
    <property type="entry name" value="Sig_transdc_resp-reg_C-effctor"/>
</dbReference>
<dbReference type="InterPro" id="IPR011990">
    <property type="entry name" value="TPR-like_helical_dom_sf"/>
</dbReference>
<dbReference type="InterPro" id="IPR041617">
    <property type="entry name" value="TPR_MalT"/>
</dbReference>
<dbReference type="InterPro" id="IPR023768">
    <property type="entry name" value="Tscrpt_reg_HTH_MalT"/>
</dbReference>
<dbReference type="InterPro" id="IPR000792">
    <property type="entry name" value="Tscrpt_reg_LuxR_C"/>
</dbReference>
<dbReference type="InterPro" id="IPR036388">
    <property type="entry name" value="WH-like_DNA-bd_sf"/>
</dbReference>
<dbReference type="NCBIfam" id="NF003420">
    <property type="entry name" value="PRK04841.1"/>
    <property type="match status" value="1"/>
</dbReference>
<dbReference type="PANTHER" id="PTHR44688">
    <property type="entry name" value="DNA-BINDING TRANSCRIPTIONAL ACTIVATOR DEVR_DOSR"/>
    <property type="match status" value="1"/>
</dbReference>
<dbReference type="PANTHER" id="PTHR44688:SF16">
    <property type="entry name" value="DNA-BINDING TRANSCRIPTIONAL ACTIVATOR DEVR_DOSR"/>
    <property type="match status" value="1"/>
</dbReference>
<dbReference type="Pfam" id="PF00196">
    <property type="entry name" value="GerE"/>
    <property type="match status" value="1"/>
</dbReference>
<dbReference type="Pfam" id="PF17874">
    <property type="entry name" value="TPR_MalT"/>
    <property type="match status" value="1"/>
</dbReference>
<dbReference type="PRINTS" id="PR00038">
    <property type="entry name" value="HTHLUXR"/>
</dbReference>
<dbReference type="SMART" id="SM00421">
    <property type="entry name" value="HTH_LUXR"/>
    <property type="match status" value="1"/>
</dbReference>
<dbReference type="SUPFAM" id="SSF46894">
    <property type="entry name" value="C-terminal effector domain of the bipartite response regulators"/>
    <property type="match status" value="1"/>
</dbReference>
<dbReference type="SUPFAM" id="SSF52540">
    <property type="entry name" value="P-loop containing nucleoside triphosphate hydrolases"/>
    <property type="match status" value="1"/>
</dbReference>
<dbReference type="SUPFAM" id="SSF48452">
    <property type="entry name" value="TPR-like"/>
    <property type="match status" value="1"/>
</dbReference>
<dbReference type="PROSITE" id="PS00622">
    <property type="entry name" value="HTH_LUXR_1"/>
    <property type="match status" value="1"/>
</dbReference>
<dbReference type="PROSITE" id="PS50043">
    <property type="entry name" value="HTH_LUXR_2"/>
    <property type="match status" value="1"/>
</dbReference>
<evidence type="ECO:0000255" key="1">
    <source>
        <dbReference type="HAMAP-Rule" id="MF_01247"/>
    </source>
</evidence>
<proteinExistence type="inferred from homology"/>
<reference key="1">
    <citation type="journal article" date="2001" name="Nature">
        <title>Complete genome sequence of Salmonella enterica serovar Typhimurium LT2.</title>
        <authorList>
            <person name="McClelland M."/>
            <person name="Sanderson K.E."/>
            <person name="Spieth J."/>
            <person name="Clifton S.W."/>
            <person name="Latreille P."/>
            <person name="Courtney L."/>
            <person name="Porwollik S."/>
            <person name="Ali J."/>
            <person name="Dante M."/>
            <person name="Du F."/>
            <person name="Hou S."/>
            <person name="Layman D."/>
            <person name="Leonard S."/>
            <person name="Nguyen C."/>
            <person name="Scott K."/>
            <person name="Holmes A."/>
            <person name="Grewal N."/>
            <person name="Mulvaney E."/>
            <person name="Ryan E."/>
            <person name="Sun H."/>
            <person name="Florea L."/>
            <person name="Miller W."/>
            <person name="Stoneking T."/>
            <person name="Nhan M."/>
            <person name="Waterston R."/>
            <person name="Wilson R.K."/>
        </authorList>
    </citation>
    <scope>NUCLEOTIDE SEQUENCE [LARGE SCALE GENOMIC DNA]</scope>
    <source>
        <strain>LT2 / SGSC1412 / ATCC 700720</strain>
    </source>
</reference>
<feature type="chain" id="PRO_0000184168" description="HTH-type transcriptional regulator MalT">
    <location>
        <begin position="1"/>
        <end position="901"/>
    </location>
</feature>
<feature type="domain" description="HTH luxR-type" evidence="1">
    <location>
        <begin position="829"/>
        <end position="894"/>
    </location>
</feature>
<feature type="DNA-binding region" description="H-T-H motif" evidence="1">
    <location>
        <begin position="853"/>
        <end position="872"/>
    </location>
</feature>
<feature type="binding site" evidence="1">
    <location>
        <begin position="39"/>
        <end position="46"/>
    </location>
    <ligand>
        <name>ATP</name>
        <dbReference type="ChEBI" id="CHEBI:30616"/>
    </ligand>
</feature>
<sequence>MLIPSKLSRPVRLDHTVVRERLLAKLSGANNFRLALVTSPAGYGKTTLVSQWAAGKNELGWYSLDEGDNQQERFASYLIAAIQQATGGHCSTSEAMAQKRQYASLTSLFAQLFIELAQWHRPLYLVIDDYHLITNPVIHDAMRFFLRHQPENFTLVVLSRNLPQLGIANLRVRDQLLEIGSQQLAFNHQEAKQFFDRRLSSPIEAAESSRMCDDVAGWATALQLIALSARQNHTSAHHSARRLAGINASHLSDYLVDEVLDNVDVSTRHFLLKSAILRSMNDALIVRVTGEENGQMRLEEIERQGLFLQRMDDTGEWFSYHPLFGSFLRQRCQWELAAELPEIHRAAAESWMEQGFPSEAIHHALAAGDAQMLRDILLNHAWGLFNHSELALLEESLKALPWESLLENPRLVLLQAWLMQSQHRYSEVNTLLARAEQEIKGVMDGTLHAEFNALRAQVAINDGNPEEAERLAKLALDELPLAWFYSRIVATSVHGEVLHCKGDLSQSLSLMQQTEQMARHHDVWHYALWSLIQQSEIQFAQGFLQAAWETQERAFQLIKEQHLEQLPMHEFLVRIRAQLLWAWARLDEAEASARSGIAVLSTFQPQQQLQCLTLLVQCSLARGDLDNARSQLNRLENLLGNGRYHCDWISNADKVRVIYWQLTGDKKSAANWLRHTPKPAFANNHFLQGQWRNIARAQILLGEFEPAEIVLEELNENARSLRLMSDLNCNLLLLNQLYWQSGRKNDAQRVLLDALQLANRTGFISHFVIEGEAMAQQLRQLIQLNTLPEMEQHRAQRILREINQHHRHKFAHFDEGFVERLLNHPDVPELIRTSPLTQREWQVLGLIYSGYSNEQIAGELAVAATTIKTHIRNLYQKLGVAHRQDAVQHAQQLLKMMGYGV</sequence>